<gene>
    <name evidence="1" type="primary">rimO</name>
    <name type="ordered locus">Noca_2319</name>
</gene>
<feature type="chain" id="PRO_0000374905" description="Ribosomal protein uS12 methylthiotransferase RimO">
    <location>
        <begin position="1"/>
        <end position="480"/>
    </location>
</feature>
<feature type="domain" description="MTTase N-terminal" evidence="1">
    <location>
        <begin position="14"/>
        <end position="135"/>
    </location>
</feature>
<feature type="domain" description="Radical SAM core" evidence="2">
    <location>
        <begin position="179"/>
        <end position="410"/>
    </location>
</feature>
<feature type="domain" description="TRAM" evidence="1">
    <location>
        <begin position="412"/>
        <end position="480"/>
    </location>
</feature>
<feature type="binding site" evidence="1">
    <location>
        <position position="23"/>
    </location>
    <ligand>
        <name>[4Fe-4S] cluster</name>
        <dbReference type="ChEBI" id="CHEBI:49883"/>
        <label>1</label>
    </ligand>
</feature>
<feature type="binding site" evidence="1">
    <location>
        <position position="59"/>
    </location>
    <ligand>
        <name>[4Fe-4S] cluster</name>
        <dbReference type="ChEBI" id="CHEBI:49883"/>
        <label>1</label>
    </ligand>
</feature>
<feature type="binding site" evidence="1">
    <location>
        <position position="98"/>
    </location>
    <ligand>
        <name>[4Fe-4S] cluster</name>
        <dbReference type="ChEBI" id="CHEBI:49883"/>
        <label>1</label>
    </ligand>
</feature>
<feature type="binding site" evidence="1">
    <location>
        <position position="193"/>
    </location>
    <ligand>
        <name>[4Fe-4S] cluster</name>
        <dbReference type="ChEBI" id="CHEBI:49883"/>
        <label>2</label>
        <note>4Fe-4S-S-AdoMet</note>
    </ligand>
</feature>
<feature type="binding site" evidence="1">
    <location>
        <position position="197"/>
    </location>
    <ligand>
        <name>[4Fe-4S] cluster</name>
        <dbReference type="ChEBI" id="CHEBI:49883"/>
        <label>2</label>
        <note>4Fe-4S-S-AdoMet</note>
    </ligand>
</feature>
<feature type="binding site" evidence="1">
    <location>
        <position position="200"/>
    </location>
    <ligand>
        <name>[4Fe-4S] cluster</name>
        <dbReference type="ChEBI" id="CHEBI:49883"/>
        <label>2</label>
        <note>4Fe-4S-S-AdoMet</note>
    </ligand>
</feature>
<proteinExistence type="inferred from homology"/>
<keyword id="KW-0004">4Fe-4S</keyword>
<keyword id="KW-0963">Cytoplasm</keyword>
<keyword id="KW-0408">Iron</keyword>
<keyword id="KW-0411">Iron-sulfur</keyword>
<keyword id="KW-0479">Metal-binding</keyword>
<keyword id="KW-1185">Reference proteome</keyword>
<keyword id="KW-0949">S-adenosyl-L-methionine</keyword>
<keyword id="KW-0808">Transferase</keyword>
<protein>
    <recommendedName>
        <fullName evidence="1">Ribosomal protein uS12 methylthiotransferase RimO</fullName>
        <shortName evidence="1">uS12 MTTase</shortName>
        <shortName evidence="1">uS12 methylthiotransferase</shortName>
        <ecNumber evidence="1">2.8.4.4</ecNumber>
    </recommendedName>
    <alternativeName>
        <fullName evidence="1">Ribosomal protein uS12 (aspartate-C(3))-methylthiotransferase</fullName>
    </alternativeName>
    <alternativeName>
        <fullName evidence="1">Ribosome maturation factor RimO</fullName>
    </alternativeName>
</protein>
<organism>
    <name type="scientific">Nocardioides sp. (strain ATCC BAA-499 / JS614)</name>
    <dbReference type="NCBI Taxonomy" id="196162"/>
    <lineage>
        <taxon>Bacteria</taxon>
        <taxon>Bacillati</taxon>
        <taxon>Actinomycetota</taxon>
        <taxon>Actinomycetes</taxon>
        <taxon>Propionibacteriales</taxon>
        <taxon>Nocardioidaceae</taxon>
        <taxon>Nocardioides</taxon>
    </lineage>
</organism>
<reference key="1">
    <citation type="submission" date="2006-12" db="EMBL/GenBank/DDBJ databases">
        <title>Complete sequence of chromosome 1 of Nocardioides sp. JS614.</title>
        <authorList>
            <person name="Copeland A."/>
            <person name="Lucas S."/>
            <person name="Lapidus A."/>
            <person name="Barry K."/>
            <person name="Detter J.C."/>
            <person name="Glavina del Rio T."/>
            <person name="Hammon N."/>
            <person name="Israni S."/>
            <person name="Dalin E."/>
            <person name="Tice H."/>
            <person name="Pitluck S."/>
            <person name="Thompson L.S."/>
            <person name="Brettin T."/>
            <person name="Bruce D."/>
            <person name="Han C."/>
            <person name="Tapia R."/>
            <person name="Schmutz J."/>
            <person name="Larimer F."/>
            <person name="Land M."/>
            <person name="Hauser L."/>
            <person name="Kyrpides N."/>
            <person name="Kim E."/>
            <person name="Mattes T."/>
            <person name="Gossett J."/>
            <person name="Richardson P."/>
        </authorList>
    </citation>
    <scope>NUCLEOTIDE SEQUENCE [LARGE SCALE GENOMIC DNA]</scope>
    <source>
        <strain>ATCC BAA-499 / JS614</strain>
    </source>
</reference>
<accession>A1SJ39</accession>
<comment type="function">
    <text evidence="1">Catalyzes the methylthiolation of an aspartic acid residue of ribosomal protein uS12.</text>
</comment>
<comment type="catalytic activity">
    <reaction evidence="1">
        <text>L-aspartate(89)-[ribosomal protein uS12]-hydrogen + (sulfur carrier)-SH + AH2 + 2 S-adenosyl-L-methionine = 3-methylsulfanyl-L-aspartate(89)-[ribosomal protein uS12]-hydrogen + (sulfur carrier)-H + 5'-deoxyadenosine + L-methionine + A + S-adenosyl-L-homocysteine + 2 H(+)</text>
        <dbReference type="Rhea" id="RHEA:37087"/>
        <dbReference type="Rhea" id="RHEA-COMP:10460"/>
        <dbReference type="Rhea" id="RHEA-COMP:10461"/>
        <dbReference type="Rhea" id="RHEA-COMP:14737"/>
        <dbReference type="Rhea" id="RHEA-COMP:14739"/>
        <dbReference type="ChEBI" id="CHEBI:13193"/>
        <dbReference type="ChEBI" id="CHEBI:15378"/>
        <dbReference type="ChEBI" id="CHEBI:17319"/>
        <dbReference type="ChEBI" id="CHEBI:17499"/>
        <dbReference type="ChEBI" id="CHEBI:29917"/>
        <dbReference type="ChEBI" id="CHEBI:29961"/>
        <dbReference type="ChEBI" id="CHEBI:57844"/>
        <dbReference type="ChEBI" id="CHEBI:57856"/>
        <dbReference type="ChEBI" id="CHEBI:59789"/>
        <dbReference type="ChEBI" id="CHEBI:64428"/>
        <dbReference type="ChEBI" id="CHEBI:73599"/>
        <dbReference type="EC" id="2.8.4.4"/>
    </reaction>
</comment>
<comment type="cofactor">
    <cofactor evidence="1">
        <name>[4Fe-4S] cluster</name>
        <dbReference type="ChEBI" id="CHEBI:49883"/>
    </cofactor>
    <text evidence="1">Binds 2 [4Fe-4S] clusters. One cluster is coordinated with 3 cysteines and an exchangeable S-adenosyl-L-methionine.</text>
</comment>
<comment type="subcellular location">
    <subcellularLocation>
        <location evidence="1">Cytoplasm</location>
    </subcellularLocation>
</comment>
<comment type="similarity">
    <text evidence="1">Belongs to the methylthiotransferase family. RimO subfamily.</text>
</comment>
<dbReference type="EC" id="2.8.4.4" evidence="1"/>
<dbReference type="EMBL" id="CP000509">
    <property type="protein sequence ID" value="ABL81824.1"/>
    <property type="molecule type" value="Genomic_DNA"/>
</dbReference>
<dbReference type="SMR" id="A1SJ39"/>
<dbReference type="STRING" id="196162.Noca_2319"/>
<dbReference type="KEGG" id="nca:Noca_2319"/>
<dbReference type="eggNOG" id="COG0621">
    <property type="taxonomic scope" value="Bacteria"/>
</dbReference>
<dbReference type="HOGENOM" id="CLU_018697_0_1_11"/>
<dbReference type="OrthoDB" id="9805215at2"/>
<dbReference type="Proteomes" id="UP000000640">
    <property type="component" value="Chromosome"/>
</dbReference>
<dbReference type="GO" id="GO:0005829">
    <property type="term" value="C:cytosol"/>
    <property type="evidence" value="ECO:0007669"/>
    <property type="project" value="TreeGrafter"/>
</dbReference>
<dbReference type="GO" id="GO:0051539">
    <property type="term" value="F:4 iron, 4 sulfur cluster binding"/>
    <property type="evidence" value="ECO:0007669"/>
    <property type="project" value="UniProtKB-UniRule"/>
</dbReference>
<dbReference type="GO" id="GO:0035599">
    <property type="term" value="F:aspartic acid methylthiotransferase activity"/>
    <property type="evidence" value="ECO:0007669"/>
    <property type="project" value="TreeGrafter"/>
</dbReference>
<dbReference type="GO" id="GO:0046872">
    <property type="term" value="F:metal ion binding"/>
    <property type="evidence" value="ECO:0007669"/>
    <property type="project" value="UniProtKB-KW"/>
</dbReference>
<dbReference type="GO" id="GO:0103039">
    <property type="term" value="F:protein methylthiotransferase activity"/>
    <property type="evidence" value="ECO:0007669"/>
    <property type="project" value="UniProtKB-EC"/>
</dbReference>
<dbReference type="GO" id="GO:0006400">
    <property type="term" value="P:tRNA modification"/>
    <property type="evidence" value="ECO:0007669"/>
    <property type="project" value="InterPro"/>
</dbReference>
<dbReference type="CDD" id="cd01335">
    <property type="entry name" value="Radical_SAM"/>
    <property type="match status" value="1"/>
</dbReference>
<dbReference type="FunFam" id="3.80.30.20:FF:000001">
    <property type="entry name" value="tRNA-2-methylthio-N(6)-dimethylallyladenosine synthase 2"/>
    <property type="match status" value="1"/>
</dbReference>
<dbReference type="Gene3D" id="3.40.50.12160">
    <property type="entry name" value="Methylthiotransferase, N-terminal domain"/>
    <property type="match status" value="1"/>
</dbReference>
<dbReference type="Gene3D" id="2.40.50.140">
    <property type="entry name" value="Nucleic acid-binding proteins"/>
    <property type="match status" value="1"/>
</dbReference>
<dbReference type="Gene3D" id="3.80.30.20">
    <property type="entry name" value="tm_1862 like domain"/>
    <property type="match status" value="1"/>
</dbReference>
<dbReference type="HAMAP" id="MF_01865">
    <property type="entry name" value="MTTase_RimO"/>
    <property type="match status" value="1"/>
</dbReference>
<dbReference type="InterPro" id="IPR006638">
    <property type="entry name" value="Elp3/MiaA/NifB-like_rSAM"/>
</dbReference>
<dbReference type="InterPro" id="IPR005839">
    <property type="entry name" value="Methylthiotransferase"/>
</dbReference>
<dbReference type="InterPro" id="IPR020612">
    <property type="entry name" value="Methylthiotransferase_CS"/>
</dbReference>
<dbReference type="InterPro" id="IPR013848">
    <property type="entry name" value="Methylthiotransferase_N"/>
</dbReference>
<dbReference type="InterPro" id="IPR038135">
    <property type="entry name" value="Methylthiotransferase_N_sf"/>
</dbReference>
<dbReference type="InterPro" id="IPR012340">
    <property type="entry name" value="NA-bd_OB-fold"/>
</dbReference>
<dbReference type="InterPro" id="IPR005840">
    <property type="entry name" value="Ribosomal_uS12_MeSTrfase_RimO"/>
</dbReference>
<dbReference type="InterPro" id="IPR007197">
    <property type="entry name" value="rSAM"/>
</dbReference>
<dbReference type="InterPro" id="IPR023404">
    <property type="entry name" value="rSAM_horseshoe"/>
</dbReference>
<dbReference type="InterPro" id="IPR002792">
    <property type="entry name" value="TRAM_dom"/>
</dbReference>
<dbReference type="NCBIfam" id="TIGR01125">
    <property type="entry name" value="30S ribosomal protein S12 methylthiotransferase RimO"/>
    <property type="match status" value="1"/>
</dbReference>
<dbReference type="NCBIfam" id="TIGR00089">
    <property type="entry name" value="MiaB/RimO family radical SAM methylthiotransferase"/>
    <property type="match status" value="1"/>
</dbReference>
<dbReference type="PANTHER" id="PTHR43837">
    <property type="entry name" value="RIBOSOMAL PROTEIN S12 METHYLTHIOTRANSFERASE RIMO"/>
    <property type="match status" value="1"/>
</dbReference>
<dbReference type="PANTHER" id="PTHR43837:SF1">
    <property type="entry name" value="RIBOSOMAL PROTEIN US12 METHYLTHIOTRANSFERASE RIMO"/>
    <property type="match status" value="1"/>
</dbReference>
<dbReference type="Pfam" id="PF04055">
    <property type="entry name" value="Radical_SAM"/>
    <property type="match status" value="1"/>
</dbReference>
<dbReference type="Pfam" id="PF18693">
    <property type="entry name" value="TRAM_2"/>
    <property type="match status" value="1"/>
</dbReference>
<dbReference type="Pfam" id="PF00919">
    <property type="entry name" value="UPF0004"/>
    <property type="match status" value="1"/>
</dbReference>
<dbReference type="SFLD" id="SFLDG01082">
    <property type="entry name" value="B12-binding_domain_containing"/>
    <property type="match status" value="1"/>
</dbReference>
<dbReference type="SFLD" id="SFLDG01061">
    <property type="entry name" value="methylthiotransferase"/>
    <property type="match status" value="1"/>
</dbReference>
<dbReference type="SFLD" id="SFLDF00274">
    <property type="entry name" value="ribosomal_protein_S12_methylth"/>
    <property type="match status" value="1"/>
</dbReference>
<dbReference type="SMART" id="SM00729">
    <property type="entry name" value="Elp3"/>
    <property type="match status" value="1"/>
</dbReference>
<dbReference type="SUPFAM" id="SSF102114">
    <property type="entry name" value="Radical SAM enzymes"/>
    <property type="match status" value="1"/>
</dbReference>
<dbReference type="PROSITE" id="PS51449">
    <property type="entry name" value="MTTASE_N"/>
    <property type="match status" value="1"/>
</dbReference>
<dbReference type="PROSITE" id="PS01278">
    <property type="entry name" value="MTTASE_RADICAL"/>
    <property type="match status" value="1"/>
</dbReference>
<dbReference type="PROSITE" id="PS51918">
    <property type="entry name" value="RADICAL_SAM"/>
    <property type="match status" value="1"/>
</dbReference>
<name>RIMO_NOCSJ</name>
<evidence type="ECO:0000255" key="1">
    <source>
        <dbReference type="HAMAP-Rule" id="MF_01865"/>
    </source>
</evidence>
<evidence type="ECO:0000255" key="2">
    <source>
        <dbReference type="PROSITE-ProRule" id="PRU01266"/>
    </source>
</evidence>
<sequence>MTTDSSPAPVRELLSVAMVTLGCARNEVDSEELAGRLEADGFRLVQDPAEADTVVVNTCGFVEAAKKDSVDTLLQAADLKARSEQGQGRTRAVVAVGCLAERYGKDLAASLPEADAVFGFDDYPDIAARLRSIVAGEAHEAHTPHDRRTLLPITPVERVLSTTPVPGHASGPASVRRRLDDGPTAALKLASGCDRRCSFCAIPAFRGSFLSRRPSDVLQEARWLADHGARELFLVSENSTSYGKDLGDLRLLETLLPELAAVDGVERVRVSYLQPAETRAGLIEAIASTPGVAPYFDLSFQHASAPVLRRMRRFGDPESFLALLAQVRGHAPAAGVRSNVIVGFPGETEQDLETLCDFLVAARLDVTGVFGYSDEDGTEAATYDGKLDDDEIRARVEHVSDLVEELTSQRAAERLGEQVEVLVERVEDGPGGRTVEGRAAHQGPEVDGATYLLDSDARVGDLVRAVVVGSEGADLDARPL</sequence>